<gene>
    <name type="primary">OR51E1</name>
    <name type="synonym">GPR164</name>
    <name type="synonym">OR51E1P</name>
    <name type="synonym">OR52A3P</name>
    <name type="synonym">POGR</name>
    <name type="synonym">PSGR2</name>
</gene>
<sequence>MMVDPNGNESSATYFILIGLPGLEEAQFWLAFPLCSLYLIAVLGNLTIIYIVRTEHSLHEPMYIFLCMLSGIDILISTSSMPKMLAIFWFNSTTIQFDACLLQMFAIHSLSGMESTVLLAMAFDRYVAICHPLRHATVLTLPRVTKIGVAAVVRGAALMAPLPVFIKQLPFCRSNILSHSYCLHQDVMKLACDDIRVNVVYGLIVIISAIGLDSLLISFSYLLILKTVLGLTREAQAKAFGTCVSHVCAVFIFYVPFIGLSMVHRFSKRRDSPLPVILANIYLLVPPVLNPIVYGVKTKEIRQRILRLFHVATHASEP</sequence>
<reference key="1">
    <citation type="journal article" date="2004" name="Biochem. Biophys. Res. Commun.">
        <title>D-GPCR: a novel putative G protein-coupled receptor overexpressed in prostate cancer and prostate.</title>
        <authorList>
            <person name="Weigle B."/>
            <person name="Fuessel S."/>
            <person name="Ebner R."/>
            <person name="Temme A."/>
            <person name="Schmitz M."/>
            <person name="Schwind S."/>
            <person name="Kiessling A."/>
            <person name="Rieger M.A."/>
            <person name="Meye A."/>
            <person name="Bachmann M."/>
            <person name="Wirth M.P."/>
            <person name="Rieber E.P."/>
        </authorList>
    </citation>
    <scope>NUCLEOTIDE SEQUENCE [MRNA]</scope>
    <scope>SUBCELLULAR LOCATION</scope>
    <scope>TISSUE SPECIFICITY</scope>
    <source>
        <tissue>Prostate</tissue>
    </source>
</reference>
<reference key="2">
    <citation type="submission" date="2001-07" db="EMBL/GenBank/DDBJ databases">
        <title>Genome-wide discovery and analysis of human seven transmembrane helix receptor genes.</title>
        <authorList>
            <person name="Suwa M."/>
            <person name="Sato T."/>
            <person name="Okouchi I."/>
            <person name="Arita M."/>
            <person name="Futami K."/>
            <person name="Matsumoto S."/>
            <person name="Tsutsumi S."/>
            <person name="Aburatani H."/>
            <person name="Asai K."/>
            <person name="Akiyama Y."/>
        </authorList>
    </citation>
    <scope>NUCLEOTIDE SEQUENCE [GENOMIC DNA]</scope>
</reference>
<reference key="3">
    <citation type="journal article" date="2006" name="Int. J. Cancer">
        <title>PSGR2, a novel G-protein coupled receptor, is overexpressed in human prostate cancer.</title>
        <authorList>
            <person name="Weng J."/>
            <person name="Wang J."/>
            <person name="Hu X."/>
            <person name="Wang F."/>
            <person name="Ittmann M."/>
            <person name="Liu M."/>
        </authorList>
    </citation>
    <scope>NUCLEOTIDE SEQUENCE [MRNA]</scope>
    <scope>TISSUE SPECIFICITY</scope>
</reference>
<reference key="4">
    <citation type="journal article" date="2004" name="Nat. Genet.">
        <title>Complete sequencing and characterization of 21,243 full-length human cDNAs.</title>
        <authorList>
            <person name="Ota T."/>
            <person name="Suzuki Y."/>
            <person name="Nishikawa T."/>
            <person name="Otsuki T."/>
            <person name="Sugiyama T."/>
            <person name="Irie R."/>
            <person name="Wakamatsu A."/>
            <person name="Hayashi K."/>
            <person name="Sato H."/>
            <person name="Nagai K."/>
            <person name="Kimura K."/>
            <person name="Makita H."/>
            <person name="Sekine M."/>
            <person name="Obayashi M."/>
            <person name="Nishi T."/>
            <person name="Shibahara T."/>
            <person name="Tanaka T."/>
            <person name="Ishii S."/>
            <person name="Yamamoto J."/>
            <person name="Saito K."/>
            <person name="Kawai Y."/>
            <person name="Isono Y."/>
            <person name="Nakamura Y."/>
            <person name="Nagahari K."/>
            <person name="Murakami K."/>
            <person name="Yasuda T."/>
            <person name="Iwayanagi T."/>
            <person name="Wagatsuma M."/>
            <person name="Shiratori A."/>
            <person name="Sudo H."/>
            <person name="Hosoiri T."/>
            <person name="Kaku Y."/>
            <person name="Kodaira H."/>
            <person name="Kondo H."/>
            <person name="Sugawara M."/>
            <person name="Takahashi M."/>
            <person name="Kanda K."/>
            <person name="Yokoi T."/>
            <person name="Furuya T."/>
            <person name="Kikkawa E."/>
            <person name="Omura Y."/>
            <person name="Abe K."/>
            <person name="Kamihara K."/>
            <person name="Katsuta N."/>
            <person name="Sato K."/>
            <person name="Tanikawa M."/>
            <person name="Yamazaki M."/>
            <person name="Ninomiya K."/>
            <person name="Ishibashi T."/>
            <person name="Yamashita H."/>
            <person name="Murakawa K."/>
            <person name="Fujimori K."/>
            <person name="Tanai H."/>
            <person name="Kimata M."/>
            <person name="Watanabe M."/>
            <person name="Hiraoka S."/>
            <person name="Chiba Y."/>
            <person name="Ishida S."/>
            <person name="Ono Y."/>
            <person name="Takiguchi S."/>
            <person name="Watanabe S."/>
            <person name="Yosida M."/>
            <person name="Hotuta T."/>
            <person name="Kusano J."/>
            <person name="Kanehori K."/>
            <person name="Takahashi-Fujii A."/>
            <person name="Hara H."/>
            <person name="Tanase T.-O."/>
            <person name="Nomura Y."/>
            <person name="Togiya S."/>
            <person name="Komai F."/>
            <person name="Hara R."/>
            <person name="Takeuchi K."/>
            <person name="Arita M."/>
            <person name="Imose N."/>
            <person name="Musashino K."/>
            <person name="Yuuki H."/>
            <person name="Oshima A."/>
            <person name="Sasaki N."/>
            <person name="Aotsuka S."/>
            <person name="Yoshikawa Y."/>
            <person name="Matsunawa H."/>
            <person name="Ichihara T."/>
            <person name="Shiohata N."/>
            <person name="Sano S."/>
            <person name="Moriya S."/>
            <person name="Momiyama H."/>
            <person name="Satoh N."/>
            <person name="Takami S."/>
            <person name="Terashima Y."/>
            <person name="Suzuki O."/>
            <person name="Nakagawa S."/>
            <person name="Senoh A."/>
            <person name="Mizoguchi H."/>
            <person name="Goto Y."/>
            <person name="Shimizu F."/>
            <person name="Wakebe H."/>
            <person name="Hishigaki H."/>
            <person name="Watanabe T."/>
            <person name="Sugiyama A."/>
            <person name="Takemoto M."/>
            <person name="Kawakami B."/>
            <person name="Yamazaki M."/>
            <person name="Watanabe K."/>
            <person name="Kumagai A."/>
            <person name="Itakura S."/>
            <person name="Fukuzumi Y."/>
            <person name="Fujimori Y."/>
            <person name="Komiyama M."/>
            <person name="Tashiro H."/>
            <person name="Tanigami A."/>
            <person name="Fujiwara T."/>
            <person name="Ono T."/>
            <person name="Yamada K."/>
            <person name="Fujii Y."/>
            <person name="Ozaki K."/>
            <person name="Hirao M."/>
            <person name="Ohmori Y."/>
            <person name="Kawabata A."/>
            <person name="Hikiji T."/>
            <person name="Kobatake N."/>
            <person name="Inagaki H."/>
            <person name="Ikema Y."/>
            <person name="Okamoto S."/>
            <person name="Okitani R."/>
            <person name="Kawakami T."/>
            <person name="Noguchi S."/>
            <person name="Itoh T."/>
            <person name="Shigeta K."/>
            <person name="Senba T."/>
            <person name="Matsumura K."/>
            <person name="Nakajima Y."/>
            <person name="Mizuno T."/>
            <person name="Morinaga M."/>
            <person name="Sasaki M."/>
            <person name="Togashi T."/>
            <person name="Oyama M."/>
            <person name="Hata H."/>
            <person name="Watanabe M."/>
            <person name="Komatsu T."/>
            <person name="Mizushima-Sugano J."/>
            <person name="Satoh T."/>
            <person name="Shirai Y."/>
            <person name="Takahashi Y."/>
            <person name="Nakagawa K."/>
            <person name="Okumura K."/>
            <person name="Nagase T."/>
            <person name="Nomura N."/>
            <person name="Kikuchi H."/>
            <person name="Masuho Y."/>
            <person name="Yamashita R."/>
            <person name="Nakai K."/>
            <person name="Yada T."/>
            <person name="Nakamura Y."/>
            <person name="Ohara O."/>
            <person name="Isogai T."/>
            <person name="Sugano S."/>
        </authorList>
    </citation>
    <scope>NUCLEOTIDE SEQUENCE [LARGE SCALE MRNA]</scope>
    <source>
        <tissue>Uterus</tissue>
    </source>
</reference>
<reference key="5">
    <citation type="submission" date="2005-09" db="EMBL/GenBank/DDBJ databases">
        <authorList>
            <person name="Mural R.J."/>
            <person name="Istrail S."/>
            <person name="Sutton G.G."/>
            <person name="Florea L."/>
            <person name="Halpern A.L."/>
            <person name="Mobarry C.M."/>
            <person name="Lippert R."/>
            <person name="Walenz B."/>
            <person name="Shatkay H."/>
            <person name="Dew I."/>
            <person name="Miller J.R."/>
            <person name="Flanigan M.J."/>
            <person name="Edwards N.J."/>
            <person name="Bolanos R."/>
            <person name="Fasulo D."/>
            <person name="Halldorsson B.V."/>
            <person name="Hannenhalli S."/>
            <person name="Turner R."/>
            <person name="Yooseph S."/>
            <person name="Lu F."/>
            <person name="Nusskern D.R."/>
            <person name="Shue B.C."/>
            <person name="Zheng X.H."/>
            <person name="Zhong F."/>
            <person name="Delcher A.L."/>
            <person name="Huson D.H."/>
            <person name="Kravitz S.A."/>
            <person name="Mouchard L."/>
            <person name="Reinert K."/>
            <person name="Remington K.A."/>
            <person name="Clark A.G."/>
            <person name="Waterman M.S."/>
            <person name="Eichler E.E."/>
            <person name="Adams M.D."/>
            <person name="Hunkapiller M.W."/>
            <person name="Myers E.W."/>
            <person name="Venter J.C."/>
        </authorList>
    </citation>
    <scope>NUCLEOTIDE SEQUENCE [LARGE SCALE GENOMIC DNA]</scope>
</reference>
<reference key="6">
    <citation type="journal article" date="2004" name="Genome Res.">
        <title>The status, quality, and expansion of the NIH full-length cDNA project: the Mammalian Gene Collection (MGC).</title>
        <authorList>
            <consortium name="The MGC Project Team"/>
        </authorList>
    </citation>
    <scope>NUCLEOTIDE SEQUENCE [LARGE SCALE MRNA]</scope>
    <source>
        <tissue>Lung</tissue>
    </source>
</reference>
<reference key="7">
    <citation type="journal article" date="2004" name="Proc. Natl. Acad. Sci. U.S.A.">
        <title>The human olfactory receptor gene family.</title>
        <authorList>
            <person name="Malnic B."/>
            <person name="Godfrey P.A."/>
            <person name="Buck L.B."/>
        </authorList>
    </citation>
    <scope>IDENTIFICATION</scope>
</reference>
<reference key="8">
    <citation type="journal article" date="2004" name="Proc. Natl. Acad. Sci. U.S.A.">
        <authorList>
            <person name="Malnic B."/>
            <person name="Godfrey P.A."/>
            <person name="Buck L.B."/>
        </authorList>
    </citation>
    <scope>ERRATUM OF PUBMED:14983052</scope>
</reference>
<keyword id="KW-1003">Cell membrane</keyword>
<keyword id="KW-1015">Disulfide bond</keyword>
<keyword id="KW-0297">G-protein coupled receptor</keyword>
<keyword id="KW-0325">Glycoprotein</keyword>
<keyword id="KW-0472">Membrane</keyword>
<keyword id="KW-0552">Olfaction</keyword>
<keyword id="KW-0675">Receptor</keyword>
<keyword id="KW-1185">Reference proteome</keyword>
<keyword id="KW-0716">Sensory transduction</keyword>
<keyword id="KW-0807">Transducer</keyword>
<keyword id="KW-0812">Transmembrane</keyword>
<keyword id="KW-1133">Transmembrane helix</keyword>
<name>O51E1_HUMAN</name>
<accession>Q8TCB6</accession>
<accession>A8KAM6</accession>
<accession>Q5S4P5</accession>
<accession>Q66X57</accession>
<accession>Q6IF93</accession>
<evidence type="ECO:0000255" key="1"/>
<evidence type="ECO:0000255" key="2">
    <source>
        <dbReference type="PROSITE-ProRule" id="PRU00521"/>
    </source>
</evidence>
<evidence type="ECO:0000269" key="3">
    <source>
    </source>
</evidence>
<evidence type="ECO:0000269" key="4">
    <source>
    </source>
</evidence>
<evidence type="ECO:0000305" key="5"/>
<proteinExistence type="evidence at protein level"/>
<organism>
    <name type="scientific">Homo sapiens</name>
    <name type="common">Human</name>
    <dbReference type="NCBI Taxonomy" id="9606"/>
    <lineage>
        <taxon>Eukaryota</taxon>
        <taxon>Metazoa</taxon>
        <taxon>Chordata</taxon>
        <taxon>Craniata</taxon>
        <taxon>Vertebrata</taxon>
        <taxon>Euteleostomi</taxon>
        <taxon>Mammalia</taxon>
        <taxon>Eutheria</taxon>
        <taxon>Euarchontoglires</taxon>
        <taxon>Primates</taxon>
        <taxon>Haplorrhini</taxon>
        <taxon>Catarrhini</taxon>
        <taxon>Hominidae</taxon>
        <taxon>Homo</taxon>
    </lineage>
</organism>
<protein>
    <recommendedName>
        <fullName>Olfactory receptor 51E1</fullName>
    </recommendedName>
    <alternativeName>
        <fullName>D-GPCR</fullName>
    </alternativeName>
    <alternativeName>
        <fullName>G-protein coupled receptor 164</fullName>
    </alternativeName>
    <alternativeName>
        <fullName>Olfactory receptor 52A3</fullName>
    </alternativeName>
    <alternativeName>
        <fullName>Prostate-overexpressed G protein-coupled receptor</fullName>
    </alternativeName>
    <alternativeName>
        <fullName>Prostate-specific G protein-coupled receptor 2</fullName>
    </alternativeName>
</protein>
<feature type="chain" id="PRO_0000150750" description="Olfactory receptor 51E1">
    <location>
        <begin position="1"/>
        <end position="318"/>
    </location>
</feature>
<feature type="topological domain" description="Extracellular" evidence="5">
    <location>
        <begin position="1"/>
        <end position="31"/>
    </location>
</feature>
<feature type="transmembrane region" description="Helical" evidence="1">
    <location>
        <begin position="32"/>
        <end position="52"/>
    </location>
</feature>
<feature type="topological domain" description="Cytoplasmic" evidence="5">
    <location>
        <begin position="53"/>
        <end position="60"/>
    </location>
</feature>
<feature type="transmembrane region" description="Helical" evidence="1">
    <location>
        <begin position="61"/>
        <end position="81"/>
    </location>
</feature>
<feature type="topological domain" description="Extracellular" evidence="5">
    <location>
        <begin position="82"/>
        <end position="100"/>
    </location>
</feature>
<feature type="transmembrane region" description="Helical" evidence="1">
    <location>
        <begin position="101"/>
        <end position="123"/>
    </location>
</feature>
<feature type="topological domain" description="Cytoplasmic" evidence="5">
    <location>
        <begin position="124"/>
        <end position="145"/>
    </location>
</feature>
<feature type="transmembrane region" description="Helical" evidence="1">
    <location>
        <begin position="146"/>
        <end position="166"/>
    </location>
</feature>
<feature type="topological domain" description="Extracellular" evidence="5">
    <location>
        <begin position="167"/>
        <end position="198"/>
    </location>
</feature>
<feature type="transmembrane region" description="Helical" evidence="1">
    <location>
        <begin position="199"/>
        <end position="219"/>
    </location>
</feature>
<feature type="topological domain" description="Cytoplasmic" evidence="5">
    <location>
        <begin position="220"/>
        <end position="239"/>
    </location>
</feature>
<feature type="transmembrane region" description="Helical" evidence="1">
    <location>
        <begin position="240"/>
        <end position="260"/>
    </location>
</feature>
<feature type="topological domain" description="Extracellular" evidence="5">
    <location>
        <begin position="261"/>
        <end position="275"/>
    </location>
</feature>
<feature type="transmembrane region" description="Helical" evidence="1">
    <location>
        <begin position="276"/>
        <end position="296"/>
    </location>
</feature>
<feature type="topological domain" description="Cytoplasmic" evidence="5">
    <location>
        <begin position="297"/>
        <end position="318"/>
    </location>
</feature>
<feature type="glycosylation site" description="N-linked (GlcNAc...) asparagine" evidence="1">
    <location>
        <position position="8"/>
    </location>
</feature>
<feature type="glycosylation site" description="N-linked (GlcNAc...) asparagine" evidence="1">
    <location>
        <position position="91"/>
    </location>
</feature>
<feature type="disulfide bond" evidence="2">
    <location>
        <begin position="100"/>
        <end position="182"/>
    </location>
</feature>
<feature type="sequence variant" id="VAR_057577" description="In dbSNP:rs17224476.">
    <original>S</original>
    <variation>N</variation>
    <location>
        <position position="10"/>
    </location>
</feature>
<feature type="sequence variant" id="VAR_034317" description="In dbSNP:rs17224476.">
    <original>S</original>
    <variation>N</variation>
    <location>
        <position position="11"/>
    </location>
</feature>
<feature type="sequence conflict" description="In Ref. 1; AAU07996." evidence="5" ref="1">
    <original>L</original>
    <variation>P</variation>
    <location>
        <position position="306"/>
    </location>
</feature>
<comment type="function">
    <text evidence="5">Odorant receptor.</text>
</comment>
<comment type="interaction">
    <interactant intactId="EBI-12141505">
        <id>Q8TCB6</id>
    </interactant>
    <interactant intactId="EBI-743960">
        <id>Q8N5Z5</id>
        <label>KCTD17</label>
    </interactant>
    <organismsDiffer>false</organismsDiffer>
    <experiments>3</experiments>
</comment>
<comment type="subcellular location">
    <subcellularLocation>
        <location evidence="3">Cell membrane</location>
        <topology evidence="3">Multi-pass membrane protein</topology>
    </subcellularLocation>
</comment>
<comment type="tissue specificity">
    <text evidence="3 4">Highly expressed in prostate. Very low levels may be detected in some other tissues, such as placenta, skeletal muscle, heart, ovary and testis. Up-regulated in prostate cancers.</text>
</comment>
<comment type="similarity">
    <text evidence="2">Belongs to the G-protein coupled receptor 1 family.</text>
</comment>
<comment type="online information" name="Human Olfactory Receptor Data Exploratorium (HORDE)">
    <link uri="http://genome.weizmann.ac.il/horde/card/index/symbol:OR51E1"/>
</comment>
<dbReference type="EMBL" id="AY698056">
    <property type="protein sequence ID" value="AAU07996.1"/>
    <property type="molecule type" value="mRNA"/>
</dbReference>
<dbReference type="EMBL" id="AB065787">
    <property type="protein sequence ID" value="BAC06006.1"/>
    <property type="molecule type" value="Genomic_DNA"/>
</dbReference>
<dbReference type="EMBL" id="AY775731">
    <property type="protein sequence ID" value="AAV54110.1"/>
    <property type="molecule type" value="mRNA"/>
</dbReference>
<dbReference type="EMBL" id="AK293091">
    <property type="protein sequence ID" value="BAF85780.1"/>
    <property type="molecule type" value="mRNA"/>
</dbReference>
<dbReference type="EMBL" id="CH471064">
    <property type="protein sequence ID" value="EAW68832.1"/>
    <property type="molecule type" value="Genomic_DNA"/>
</dbReference>
<dbReference type="EMBL" id="BC022401">
    <property type="protein sequence ID" value="AAH22401.1"/>
    <property type="molecule type" value="mRNA"/>
</dbReference>
<dbReference type="EMBL" id="BK004369">
    <property type="protein sequence ID" value="DAA04767.1"/>
    <property type="molecule type" value="Genomic_DNA"/>
</dbReference>
<dbReference type="CCDS" id="CCDS31358.2"/>
<dbReference type="RefSeq" id="NP_689643.2">
    <property type="nucleotide sequence ID" value="NM_152430.4"/>
</dbReference>
<dbReference type="SMR" id="Q8TCB6"/>
<dbReference type="BioGRID" id="126808">
    <property type="interactions" value="4"/>
</dbReference>
<dbReference type="FunCoup" id="Q8TCB6">
    <property type="interactions" value="515"/>
</dbReference>
<dbReference type="IntAct" id="Q8TCB6">
    <property type="interactions" value="2"/>
</dbReference>
<dbReference type="STRING" id="9606.ENSP00000380155"/>
<dbReference type="GlyCosmos" id="Q8TCB6">
    <property type="glycosylation" value="2 sites, No reported glycans"/>
</dbReference>
<dbReference type="GlyGen" id="Q8TCB6">
    <property type="glycosylation" value="2 sites"/>
</dbReference>
<dbReference type="BioMuta" id="OR51E1"/>
<dbReference type="DMDM" id="38372839"/>
<dbReference type="MassIVE" id="Q8TCB6"/>
<dbReference type="PaxDb" id="9606-ENSP00000380155"/>
<dbReference type="PeptideAtlas" id="Q8TCB6"/>
<dbReference type="Antibodypedia" id="23519">
    <property type="antibodies" value="175 antibodies from 27 providers"/>
</dbReference>
<dbReference type="DNASU" id="143503"/>
<dbReference type="Ensembl" id="ENST00000396952.6">
    <property type="protein sequence ID" value="ENSP00000380155.5"/>
    <property type="gene ID" value="ENSG00000180785.10"/>
</dbReference>
<dbReference type="GeneID" id="143503"/>
<dbReference type="KEGG" id="hsa:143503"/>
<dbReference type="MANE-Select" id="ENST00000396952.6">
    <property type="protein sequence ID" value="ENSP00000380155.5"/>
    <property type="RefSeq nucleotide sequence ID" value="NM_152430.4"/>
    <property type="RefSeq protein sequence ID" value="NP_689643.2"/>
</dbReference>
<dbReference type="UCSC" id="uc001lzi.5">
    <property type="organism name" value="human"/>
</dbReference>
<dbReference type="AGR" id="HGNC:15194"/>
<dbReference type="CTD" id="143503"/>
<dbReference type="DisGeNET" id="143503"/>
<dbReference type="GeneCards" id="OR51E1"/>
<dbReference type="HGNC" id="HGNC:15194">
    <property type="gene designation" value="OR51E1"/>
</dbReference>
<dbReference type="HPA" id="ENSG00000180785">
    <property type="expression patterns" value="Tissue enhanced (adipose tissue, placenta, prostate)"/>
</dbReference>
<dbReference type="MIM" id="611267">
    <property type="type" value="gene"/>
</dbReference>
<dbReference type="neXtProt" id="NX_Q8TCB6"/>
<dbReference type="OpenTargets" id="ENSG00000180785"/>
<dbReference type="PharmGKB" id="PA32371"/>
<dbReference type="VEuPathDB" id="HostDB:ENSG00000180785"/>
<dbReference type="eggNOG" id="ENOG502QVRN">
    <property type="taxonomic scope" value="Eukaryota"/>
</dbReference>
<dbReference type="GeneTree" id="ENSGT01130000278286"/>
<dbReference type="HOGENOM" id="CLU_012526_0_0_1"/>
<dbReference type="InParanoid" id="Q8TCB6"/>
<dbReference type="OMA" id="VQMFAIH"/>
<dbReference type="OrthoDB" id="5969463at2759"/>
<dbReference type="PAN-GO" id="Q8TCB6">
    <property type="GO annotations" value="2 GO annotations based on evolutionary models"/>
</dbReference>
<dbReference type="PhylomeDB" id="Q8TCB6"/>
<dbReference type="TreeFam" id="TF342735"/>
<dbReference type="PathwayCommons" id="Q8TCB6"/>
<dbReference type="Reactome" id="R-HSA-381753">
    <property type="pathway name" value="Olfactory Signaling Pathway"/>
</dbReference>
<dbReference type="Reactome" id="R-HSA-9752946">
    <property type="pathway name" value="Expression and translocation of olfactory receptors"/>
</dbReference>
<dbReference type="SignaLink" id="Q8TCB6"/>
<dbReference type="BioGRID-ORCS" id="143503">
    <property type="hits" value="58 hits in 749 CRISPR screens"/>
</dbReference>
<dbReference type="ChiTaRS" id="OR51E1">
    <property type="organism name" value="human"/>
</dbReference>
<dbReference type="GeneWiki" id="OR51E1"/>
<dbReference type="GenomeRNAi" id="143503"/>
<dbReference type="Pharos" id="Q8TCB6">
    <property type="development level" value="Tbio"/>
</dbReference>
<dbReference type="PRO" id="PR:Q8TCB6"/>
<dbReference type="Proteomes" id="UP000005640">
    <property type="component" value="Chromosome 11"/>
</dbReference>
<dbReference type="RNAct" id="Q8TCB6">
    <property type="molecule type" value="protein"/>
</dbReference>
<dbReference type="Bgee" id="ENSG00000180785">
    <property type="expression patterns" value="Expressed in secondary oocyte and 85 other cell types or tissues"/>
</dbReference>
<dbReference type="ExpressionAtlas" id="Q8TCB6">
    <property type="expression patterns" value="baseline and differential"/>
</dbReference>
<dbReference type="GO" id="GO:0005886">
    <property type="term" value="C:plasma membrane"/>
    <property type="evidence" value="ECO:0000318"/>
    <property type="project" value="GO_Central"/>
</dbReference>
<dbReference type="GO" id="GO:0004930">
    <property type="term" value="F:G protein-coupled receptor activity"/>
    <property type="evidence" value="ECO:0007669"/>
    <property type="project" value="UniProtKB-KW"/>
</dbReference>
<dbReference type="GO" id="GO:0004984">
    <property type="term" value="F:olfactory receptor activity"/>
    <property type="evidence" value="ECO:0000318"/>
    <property type="project" value="GO_Central"/>
</dbReference>
<dbReference type="CDD" id="cd15222">
    <property type="entry name" value="7tmA_OR51-like"/>
    <property type="match status" value="1"/>
</dbReference>
<dbReference type="FunFam" id="1.20.1070.10:FF:000002">
    <property type="entry name" value="Olfactory receptor"/>
    <property type="match status" value="1"/>
</dbReference>
<dbReference type="Gene3D" id="1.20.1070.10">
    <property type="entry name" value="Rhodopsin 7-helix transmembrane proteins"/>
    <property type="match status" value="1"/>
</dbReference>
<dbReference type="InterPro" id="IPR000276">
    <property type="entry name" value="GPCR_Rhodpsn"/>
</dbReference>
<dbReference type="InterPro" id="IPR017452">
    <property type="entry name" value="GPCR_Rhodpsn_7TM"/>
</dbReference>
<dbReference type="InterPro" id="IPR000725">
    <property type="entry name" value="Olfact_rcpt"/>
</dbReference>
<dbReference type="InterPro" id="IPR050402">
    <property type="entry name" value="OR51/52/56-like"/>
</dbReference>
<dbReference type="PANTHER" id="PTHR26450:SF167">
    <property type="entry name" value="OLFACTORY RECEPTOR 51E1"/>
    <property type="match status" value="1"/>
</dbReference>
<dbReference type="PANTHER" id="PTHR26450">
    <property type="entry name" value="OLFACTORY RECEPTOR 56B1-RELATED"/>
    <property type="match status" value="1"/>
</dbReference>
<dbReference type="Pfam" id="PF13853">
    <property type="entry name" value="7tm_4"/>
    <property type="match status" value="1"/>
</dbReference>
<dbReference type="PRINTS" id="PR00237">
    <property type="entry name" value="GPCRRHODOPSN"/>
</dbReference>
<dbReference type="PRINTS" id="PR00245">
    <property type="entry name" value="OLFACTORYR"/>
</dbReference>
<dbReference type="SUPFAM" id="SSF81321">
    <property type="entry name" value="Family A G protein-coupled receptor-like"/>
    <property type="match status" value="1"/>
</dbReference>
<dbReference type="PROSITE" id="PS00237">
    <property type="entry name" value="G_PROTEIN_RECEP_F1_1"/>
    <property type="match status" value="1"/>
</dbReference>
<dbReference type="PROSITE" id="PS50262">
    <property type="entry name" value="G_PROTEIN_RECEP_F1_2"/>
    <property type="match status" value="1"/>
</dbReference>